<keyword id="KW-0238">DNA-binding</keyword>
<keyword id="KW-0391">Immunity</keyword>
<keyword id="KW-0399">Innate immunity</keyword>
<keyword id="KW-0539">Nucleus</keyword>
<keyword id="KW-0611">Plant defense</keyword>
<keyword id="KW-1185">Reference proteome</keyword>
<keyword id="KW-0804">Transcription</keyword>
<keyword id="KW-0805">Transcription regulation</keyword>
<feature type="chain" id="PRO_0000432033" description="AT-hook motif nuclear-localized protein 15">
    <location>
        <begin position="1"/>
        <end position="310"/>
    </location>
</feature>
<feature type="domain" description="PPC" evidence="2">
    <location>
        <begin position="112"/>
        <end position="251"/>
    </location>
</feature>
<feature type="DNA-binding region" description="A.T hook" evidence="9">
    <location>
        <begin position="88"/>
        <end position="100"/>
    </location>
</feature>
<feature type="region of interest" description="Disordered" evidence="3">
    <location>
        <begin position="15"/>
        <end position="112"/>
    </location>
</feature>
<feature type="region of interest" description="Disordered" evidence="3">
    <location>
        <begin position="239"/>
        <end position="310"/>
    </location>
</feature>
<feature type="compositionally biased region" description="Polar residues" evidence="3">
    <location>
        <begin position="31"/>
        <end position="41"/>
    </location>
</feature>
<feature type="compositionally biased region" description="Polar residues" evidence="3">
    <location>
        <begin position="51"/>
        <end position="67"/>
    </location>
</feature>
<feature type="compositionally biased region" description="Low complexity" evidence="3">
    <location>
        <begin position="94"/>
        <end position="104"/>
    </location>
</feature>
<feature type="compositionally biased region" description="Pro residues" evidence="3">
    <location>
        <begin position="301"/>
        <end position="310"/>
    </location>
</feature>
<evidence type="ECO:0000250" key="1">
    <source>
        <dbReference type="UniProtKB" id="Q8VYJ2"/>
    </source>
</evidence>
<evidence type="ECO:0000255" key="2">
    <source>
        <dbReference type="PROSITE-ProRule" id="PRU01078"/>
    </source>
</evidence>
<evidence type="ECO:0000256" key="3">
    <source>
        <dbReference type="SAM" id="MobiDB-lite"/>
    </source>
</evidence>
<evidence type="ECO:0000269" key="4">
    <source>
    </source>
</evidence>
<evidence type="ECO:0000269" key="5">
    <source>
    </source>
</evidence>
<evidence type="ECO:0000269" key="6">
    <source>
    </source>
</evidence>
<evidence type="ECO:0000303" key="7">
    <source>
    </source>
</evidence>
<evidence type="ECO:0000303" key="8">
    <source>
    </source>
</evidence>
<evidence type="ECO:0000305" key="9"/>
<evidence type="ECO:0000312" key="10">
    <source>
        <dbReference type="Araport" id="AT3G55560"/>
    </source>
</evidence>
<evidence type="ECO:0000312" key="11">
    <source>
        <dbReference type="EMBL" id="CAB75914.1"/>
    </source>
</evidence>
<evidence type="ECO:0000312" key="12">
    <source>
        <dbReference type="EMBL" id="FAA00286.1"/>
    </source>
</evidence>
<proteinExistence type="evidence at transcript level"/>
<name>AHL15_ARATH</name>
<accession>Q9M2S3</accession>
<comment type="function">
    <text evidence="1 4 5">Transcription factor that specifically binds AT-rich DNA sequences related to the nuclear matrix attachment regions (MARs) (By similarity). Binds the DNA sequence GNFEI (GA-negative feedback element I) in the GA3OX1 promoter (PubMed:17277098). Negatively regulates plant innate immunity (PTI) to pathogens through the down-regulation of the PAMP-triggered FRK1 expression (PubMed:20738724).</text>
</comment>
<comment type="subcellular location">
    <subcellularLocation>
        <location evidence="1">Nucleus</location>
    </subcellularLocation>
</comment>
<comment type="domain">
    <text evidence="6">The PPC domain mediates interactions between AHL proteins.</text>
</comment>
<comment type="miscellaneous">
    <text evidence="5">Overexpression of AHL15 results in a decreased flg22-induced expression of FRK1.</text>
</comment>
<organism>
    <name type="scientific">Arabidopsis thaliana</name>
    <name type="common">Mouse-ear cress</name>
    <dbReference type="NCBI Taxonomy" id="3702"/>
    <lineage>
        <taxon>Eukaryota</taxon>
        <taxon>Viridiplantae</taxon>
        <taxon>Streptophyta</taxon>
        <taxon>Embryophyta</taxon>
        <taxon>Tracheophyta</taxon>
        <taxon>Spermatophyta</taxon>
        <taxon>Magnoliopsida</taxon>
        <taxon>eudicotyledons</taxon>
        <taxon>Gunneridae</taxon>
        <taxon>Pentapetalae</taxon>
        <taxon>rosids</taxon>
        <taxon>malvids</taxon>
        <taxon>Brassicales</taxon>
        <taxon>Brassicaceae</taxon>
        <taxon>Camelineae</taxon>
        <taxon>Arabidopsis</taxon>
    </lineage>
</organism>
<protein>
    <recommendedName>
        <fullName evidence="12">AT-hook motif nuclear-localized protein 15</fullName>
    </recommendedName>
    <alternativeName>
        <fullName evidence="8">AT-hook protein of GA feedback 2</fullName>
    </alternativeName>
</protein>
<dbReference type="EMBL" id="AL132975">
    <property type="protein sequence ID" value="CAB75914.1"/>
    <property type="molecule type" value="Genomic_DNA"/>
</dbReference>
<dbReference type="EMBL" id="CP002686">
    <property type="protein sequence ID" value="AEE79400.1"/>
    <property type="molecule type" value="Genomic_DNA"/>
</dbReference>
<dbReference type="EMBL" id="BT024777">
    <property type="protein sequence ID" value="ABD59115.1"/>
    <property type="molecule type" value="mRNA"/>
</dbReference>
<dbReference type="EMBL" id="AY086028">
    <property type="protein sequence ID" value="AAM63238.1"/>
    <property type="molecule type" value="mRNA"/>
</dbReference>
<dbReference type="EMBL" id="BR000351">
    <property type="protein sequence ID" value="FAA00286.1"/>
    <property type="molecule type" value="mRNA"/>
</dbReference>
<dbReference type="PIR" id="T47695">
    <property type="entry name" value="T47695"/>
</dbReference>
<dbReference type="RefSeq" id="NP_191115.1">
    <property type="nucleotide sequence ID" value="NM_115413.4"/>
</dbReference>
<dbReference type="SMR" id="Q9M2S3"/>
<dbReference type="FunCoup" id="Q9M2S3">
    <property type="interactions" value="138"/>
</dbReference>
<dbReference type="STRING" id="3702.Q9M2S3"/>
<dbReference type="GlyGen" id="Q9M2S3">
    <property type="glycosylation" value="1 site, 1 O-linked glycan (1 site)"/>
</dbReference>
<dbReference type="iPTMnet" id="Q9M2S3"/>
<dbReference type="MetOSite" id="Q9M2S3"/>
<dbReference type="PaxDb" id="3702-AT3G55560.1"/>
<dbReference type="ProteomicsDB" id="244894"/>
<dbReference type="EnsemblPlants" id="AT3G55560.1">
    <property type="protein sequence ID" value="AT3G55560.1"/>
    <property type="gene ID" value="AT3G55560"/>
</dbReference>
<dbReference type="GeneID" id="824721"/>
<dbReference type="Gramene" id="AT3G55560.1">
    <property type="protein sequence ID" value="AT3G55560.1"/>
    <property type="gene ID" value="AT3G55560"/>
</dbReference>
<dbReference type="KEGG" id="ath:AT3G55560"/>
<dbReference type="Araport" id="AT3G55560"/>
<dbReference type="TAIR" id="AT3G55560">
    <property type="gene designation" value="AHL15"/>
</dbReference>
<dbReference type="eggNOG" id="ENOG502QW3T">
    <property type="taxonomic scope" value="Eukaryota"/>
</dbReference>
<dbReference type="HOGENOM" id="CLU_039808_2_0_1"/>
<dbReference type="InParanoid" id="Q9M2S3"/>
<dbReference type="OMA" id="DHDFTTN"/>
<dbReference type="OrthoDB" id="781434at2759"/>
<dbReference type="PhylomeDB" id="Q9M2S3"/>
<dbReference type="CD-CODE" id="4299E36E">
    <property type="entry name" value="Nucleolus"/>
</dbReference>
<dbReference type="PRO" id="PR:Q9M2S3"/>
<dbReference type="Proteomes" id="UP000006548">
    <property type="component" value="Chromosome 3"/>
</dbReference>
<dbReference type="ExpressionAtlas" id="Q9M2S3">
    <property type="expression patterns" value="baseline and differential"/>
</dbReference>
<dbReference type="GO" id="GO:0005634">
    <property type="term" value="C:nucleus"/>
    <property type="evidence" value="ECO:0007669"/>
    <property type="project" value="UniProtKB-SubCell"/>
</dbReference>
<dbReference type="GO" id="GO:0003680">
    <property type="term" value="F:minor groove of adenine-thymine-rich DNA binding"/>
    <property type="evidence" value="ECO:0007669"/>
    <property type="project" value="InterPro"/>
</dbReference>
<dbReference type="GO" id="GO:0045087">
    <property type="term" value="P:innate immune response"/>
    <property type="evidence" value="ECO:0007669"/>
    <property type="project" value="UniProtKB-KW"/>
</dbReference>
<dbReference type="GO" id="GO:0045824">
    <property type="term" value="P:negative regulation of innate immune response"/>
    <property type="evidence" value="ECO:0000315"/>
    <property type="project" value="UniProtKB"/>
</dbReference>
<dbReference type="CDD" id="cd11378">
    <property type="entry name" value="DUF296"/>
    <property type="match status" value="1"/>
</dbReference>
<dbReference type="FunFam" id="3.30.1330.80:FF:000007">
    <property type="entry name" value="AT-hook motif nuclear-localized protein"/>
    <property type="match status" value="1"/>
</dbReference>
<dbReference type="Gene3D" id="3.30.1330.80">
    <property type="entry name" value="Hypothetical protein, similar to alpha- acetolactate decarboxylase, domain 2"/>
    <property type="match status" value="1"/>
</dbReference>
<dbReference type="InterPro" id="IPR014476">
    <property type="entry name" value="AHL15-29"/>
</dbReference>
<dbReference type="InterPro" id="IPR005175">
    <property type="entry name" value="PPC_dom"/>
</dbReference>
<dbReference type="PANTHER" id="PTHR31100">
    <property type="entry name" value="AT-HOOK MOTIF NUCLEAR-LOCALIZED PROTEIN 15"/>
    <property type="match status" value="1"/>
</dbReference>
<dbReference type="PANTHER" id="PTHR31100:SF14">
    <property type="entry name" value="AT-HOOK MOTIF NUCLEAR-LOCALIZED PROTEIN 15"/>
    <property type="match status" value="1"/>
</dbReference>
<dbReference type="Pfam" id="PF03479">
    <property type="entry name" value="PCC"/>
    <property type="match status" value="1"/>
</dbReference>
<dbReference type="PIRSF" id="PIRSF016021">
    <property type="entry name" value="ESCAROLA"/>
    <property type="match status" value="1"/>
</dbReference>
<dbReference type="SUPFAM" id="SSF117856">
    <property type="entry name" value="AF0104/ALDC/Ptd012-like"/>
    <property type="match status" value="1"/>
</dbReference>
<dbReference type="PROSITE" id="PS51742">
    <property type="entry name" value="PPC"/>
    <property type="match status" value="1"/>
</dbReference>
<sequence length="310" mass="32603">MANPWWVGNVAIGGVESPVTSSAPSLHHRNSNNNNPPTMTRSDPRLDHDFTTNNSGSPNTQTQSQEEQNSRDEQPAVEPGSGSGSTGRRPRGRPPGSKNKPKSPVVVTKESPNSLQSHVLEIATGADVAESLNAFARRRGRGVSVLSGSGLVTNVTLRQPAASGGVVSLRGQFEILSMCGAFLPTSGSPAAAAGLTIYLAGAQGQVVGGGVAGPLIASGPVIVIAATFCNATYERLPIEEEQQQEQPLQLEDGKKQKEENDDNESGNNGNEGSMQPPMYNMPPNFIPNGHQMAQHDVYWGGPPPRAPPSY</sequence>
<reference key="1">
    <citation type="journal article" date="2000" name="Nature">
        <title>Sequence and analysis of chromosome 3 of the plant Arabidopsis thaliana.</title>
        <authorList>
            <person name="Salanoubat M."/>
            <person name="Lemcke K."/>
            <person name="Rieger M."/>
            <person name="Ansorge W."/>
            <person name="Unseld M."/>
            <person name="Fartmann B."/>
            <person name="Valle G."/>
            <person name="Bloecker H."/>
            <person name="Perez-Alonso M."/>
            <person name="Obermaier B."/>
            <person name="Delseny M."/>
            <person name="Boutry M."/>
            <person name="Grivell L.A."/>
            <person name="Mache R."/>
            <person name="Puigdomenech P."/>
            <person name="De Simone V."/>
            <person name="Choisne N."/>
            <person name="Artiguenave F."/>
            <person name="Robert C."/>
            <person name="Brottier P."/>
            <person name="Wincker P."/>
            <person name="Cattolico L."/>
            <person name="Weissenbach J."/>
            <person name="Saurin W."/>
            <person name="Quetier F."/>
            <person name="Schaefer M."/>
            <person name="Mueller-Auer S."/>
            <person name="Gabel C."/>
            <person name="Fuchs M."/>
            <person name="Benes V."/>
            <person name="Wurmbach E."/>
            <person name="Drzonek H."/>
            <person name="Erfle H."/>
            <person name="Jordan N."/>
            <person name="Bangert S."/>
            <person name="Wiedelmann R."/>
            <person name="Kranz H."/>
            <person name="Voss H."/>
            <person name="Holland R."/>
            <person name="Brandt P."/>
            <person name="Nyakatura G."/>
            <person name="Vezzi A."/>
            <person name="D'Angelo M."/>
            <person name="Pallavicini A."/>
            <person name="Toppo S."/>
            <person name="Simionati B."/>
            <person name="Conrad A."/>
            <person name="Hornischer K."/>
            <person name="Kauer G."/>
            <person name="Loehnert T.-H."/>
            <person name="Nordsiek G."/>
            <person name="Reichelt J."/>
            <person name="Scharfe M."/>
            <person name="Schoen O."/>
            <person name="Bargues M."/>
            <person name="Terol J."/>
            <person name="Climent J."/>
            <person name="Navarro P."/>
            <person name="Collado C."/>
            <person name="Perez-Perez A."/>
            <person name="Ottenwaelder B."/>
            <person name="Duchemin D."/>
            <person name="Cooke R."/>
            <person name="Laudie M."/>
            <person name="Berger-Llauro C."/>
            <person name="Purnelle B."/>
            <person name="Masuy D."/>
            <person name="de Haan M."/>
            <person name="Maarse A.C."/>
            <person name="Alcaraz J.-P."/>
            <person name="Cottet A."/>
            <person name="Casacuberta E."/>
            <person name="Monfort A."/>
            <person name="Argiriou A."/>
            <person name="Flores M."/>
            <person name="Liguori R."/>
            <person name="Vitale D."/>
            <person name="Mannhaupt G."/>
            <person name="Haase D."/>
            <person name="Schoof H."/>
            <person name="Rudd S."/>
            <person name="Zaccaria P."/>
            <person name="Mewes H.-W."/>
            <person name="Mayer K.F.X."/>
            <person name="Kaul S."/>
            <person name="Town C.D."/>
            <person name="Koo H.L."/>
            <person name="Tallon L.J."/>
            <person name="Jenkins J."/>
            <person name="Rooney T."/>
            <person name="Rizzo M."/>
            <person name="Walts A."/>
            <person name="Utterback T."/>
            <person name="Fujii C.Y."/>
            <person name="Shea T.P."/>
            <person name="Creasy T.H."/>
            <person name="Haas B."/>
            <person name="Maiti R."/>
            <person name="Wu D."/>
            <person name="Peterson J."/>
            <person name="Van Aken S."/>
            <person name="Pai G."/>
            <person name="Militscher J."/>
            <person name="Sellers P."/>
            <person name="Gill J.E."/>
            <person name="Feldblyum T.V."/>
            <person name="Preuss D."/>
            <person name="Lin X."/>
            <person name="Nierman W.C."/>
            <person name="Salzberg S.L."/>
            <person name="White O."/>
            <person name="Venter J.C."/>
            <person name="Fraser C.M."/>
            <person name="Kaneko T."/>
            <person name="Nakamura Y."/>
            <person name="Sato S."/>
            <person name="Kato T."/>
            <person name="Asamizu E."/>
            <person name="Sasamoto S."/>
            <person name="Kimura T."/>
            <person name="Idesawa K."/>
            <person name="Kawashima K."/>
            <person name="Kishida Y."/>
            <person name="Kiyokawa C."/>
            <person name="Kohara M."/>
            <person name="Matsumoto M."/>
            <person name="Matsuno A."/>
            <person name="Muraki A."/>
            <person name="Nakayama S."/>
            <person name="Nakazaki N."/>
            <person name="Shinpo S."/>
            <person name="Takeuchi C."/>
            <person name="Wada T."/>
            <person name="Watanabe A."/>
            <person name="Yamada M."/>
            <person name="Yasuda M."/>
            <person name="Tabata S."/>
        </authorList>
    </citation>
    <scope>NUCLEOTIDE SEQUENCE [LARGE SCALE GENOMIC DNA]</scope>
    <source>
        <strain>cv. Columbia</strain>
    </source>
</reference>
<reference key="2">
    <citation type="journal article" date="2017" name="Plant J.">
        <title>Araport11: a complete reannotation of the Arabidopsis thaliana reference genome.</title>
        <authorList>
            <person name="Cheng C.Y."/>
            <person name="Krishnakumar V."/>
            <person name="Chan A.P."/>
            <person name="Thibaud-Nissen F."/>
            <person name="Schobel S."/>
            <person name="Town C.D."/>
        </authorList>
    </citation>
    <scope>GENOME REANNOTATION</scope>
    <source>
        <strain>cv. Columbia</strain>
    </source>
</reference>
<reference key="3">
    <citation type="submission" date="2006-03" db="EMBL/GenBank/DDBJ databases">
        <title>Arabidopsis ORF clones.</title>
        <authorList>
            <person name="Shinn P."/>
            <person name="Chen H."/>
            <person name="Kim C.J."/>
            <person name="Ecker J.R."/>
        </authorList>
    </citation>
    <scope>NUCLEOTIDE SEQUENCE [LARGE SCALE MRNA]</scope>
    <source>
        <strain>cv. Columbia</strain>
    </source>
</reference>
<reference key="4">
    <citation type="submission" date="2009-03" db="EMBL/GenBank/DDBJ databases">
        <title>ORF cloning and analysis of Arabidopsis transcription factor genes.</title>
        <authorList>
            <person name="Fujita M."/>
            <person name="Mizukado S."/>
            <person name="Seki M."/>
            <person name="Shinozaki K."/>
            <person name="Mitsuda N."/>
            <person name="Takiguchi Y."/>
            <person name="Takagi M."/>
        </authorList>
    </citation>
    <scope>NUCLEOTIDE SEQUENCE [LARGE SCALE MRNA]</scope>
</reference>
<reference key="5">
    <citation type="submission" date="2002-03" db="EMBL/GenBank/DDBJ databases">
        <title>Full-length cDNA from Arabidopsis thaliana.</title>
        <authorList>
            <person name="Brover V.V."/>
            <person name="Troukhan M.E."/>
            <person name="Alexandrov N.A."/>
            <person name="Lu Y.-P."/>
            <person name="Flavell R.B."/>
            <person name="Feldmann K.A."/>
        </authorList>
    </citation>
    <scope>NUCLEOTIDE SEQUENCE [LARGE SCALE MRNA]</scope>
</reference>
<reference key="6">
    <citation type="journal article" date="2004" name="Plant Mol. Biol.">
        <title>Identification of a novel plant MAR DNA binding protein localized on chromosomal surfaces.</title>
        <authorList>
            <person name="Fujimoto S."/>
            <person name="Matsunaga S."/>
            <person name="Yonemura M."/>
            <person name="Uchiyama S."/>
            <person name="Azuma T."/>
            <person name="Fukui K."/>
        </authorList>
    </citation>
    <scope>IDENTIFICATION</scope>
    <scope>GENE FAMILY</scope>
    <scope>NOMENCLATURE</scope>
    <source>
        <strain>cv. Columbia</strain>
    </source>
</reference>
<reference key="7">
    <citation type="journal article" date="2007" name="Plant Physiol.">
        <title>AGF1, an AT-hook protein, is necessary for the negative feedback of AtGA3ox1 encoding GA 3-oxidase.</title>
        <authorList>
            <person name="Matsushita A."/>
            <person name="Furumoto T."/>
            <person name="Ishida S."/>
            <person name="Takahashi Y."/>
        </authorList>
    </citation>
    <scope>FUNCTION</scope>
</reference>
<reference key="8">
    <citation type="journal article" date="2010" name="J. Integr. Plant Biol.">
        <title>Overexpression of AHL20 negatively regulates defenses in Arabidopsis.</title>
        <authorList>
            <person name="Lu H."/>
            <person name="Zou Y."/>
            <person name="Feng N."/>
        </authorList>
    </citation>
    <scope>FUNCTION</scope>
</reference>
<reference key="9">
    <citation type="journal article" date="2013" name="Proc. Natl. Acad. Sci. U.S.A.">
        <title>Arabidopsis thaliana AHL family modulates hypocotyl growth redundantly by interacting with each other via the PPC/DUF296 domain.</title>
        <authorList>
            <person name="Zhao J."/>
            <person name="Favero D.S."/>
            <person name="Peng H."/>
            <person name="Neff M.M."/>
        </authorList>
    </citation>
    <scope>GENE FAMILY</scope>
    <scope>DOMAIN PPC</scope>
</reference>
<gene>
    <name evidence="7" type="primary">AHL15</name>
    <name evidence="8" type="synonym">AGF2</name>
    <name evidence="10" type="ordered locus">At3g55560</name>
    <name evidence="11" type="ORF">T22E16.220</name>
</gene>